<proteinExistence type="evidence at transcript level"/>
<organism>
    <name type="scientific">Danio rerio</name>
    <name type="common">Zebrafish</name>
    <name type="synonym">Brachydanio rerio</name>
    <dbReference type="NCBI Taxonomy" id="7955"/>
    <lineage>
        <taxon>Eukaryota</taxon>
        <taxon>Metazoa</taxon>
        <taxon>Chordata</taxon>
        <taxon>Craniata</taxon>
        <taxon>Vertebrata</taxon>
        <taxon>Euteleostomi</taxon>
        <taxon>Actinopterygii</taxon>
        <taxon>Neopterygii</taxon>
        <taxon>Teleostei</taxon>
        <taxon>Ostariophysi</taxon>
        <taxon>Cypriniformes</taxon>
        <taxon>Danionidae</taxon>
        <taxon>Danioninae</taxon>
        <taxon>Danio</taxon>
    </lineage>
</organism>
<evidence type="ECO:0000250" key="1">
    <source>
        <dbReference type="UniProtKB" id="P54577"/>
    </source>
</evidence>
<evidence type="ECO:0000255" key="2">
    <source>
        <dbReference type="PROSITE-ProRule" id="PRU00209"/>
    </source>
</evidence>
<evidence type="ECO:0000256" key="3">
    <source>
        <dbReference type="SAM" id="MobiDB-lite"/>
    </source>
</evidence>
<evidence type="ECO:0000305" key="4"/>
<name>SYYC_DANRE</name>
<keyword id="KW-0030">Aminoacyl-tRNA synthetase</keyword>
<keyword id="KW-0067">ATP-binding</keyword>
<keyword id="KW-0963">Cytoplasm</keyword>
<keyword id="KW-0436">Ligase</keyword>
<keyword id="KW-0547">Nucleotide-binding</keyword>
<keyword id="KW-0539">Nucleus</keyword>
<keyword id="KW-0648">Protein biosynthesis</keyword>
<keyword id="KW-1185">Reference proteome</keyword>
<keyword id="KW-0694">RNA-binding</keyword>
<keyword id="KW-0820">tRNA-binding</keyword>
<gene>
    <name type="primary">yars1</name>
    <name type="synonym">yars</name>
</gene>
<accession>Q6TGS6</accession>
<accession>Q6DFZ7</accession>
<protein>
    <recommendedName>
        <fullName>Tyrosine--tRNA ligase, cytoplasmic</fullName>
        <ecNumber evidence="1">6.1.1.1</ecNumber>
    </recommendedName>
    <alternativeName>
        <fullName>Tyrosyl-tRNA synthetase</fullName>
        <shortName>TyrRS</shortName>
    </alternativeName>
</protein>
<feature type="chain" id="PRO_0000239693" description="Tyrosine--tRNA ligase, cytoplasmic">
    <location>
        <begin position="1"/>
        <end position="529"/>
    </location>
</feature>
<feature type="domain" description="tRNA-binding" evidence="2">
    <location>
        <begin position="365"/>
        <end position="469"/>
    </location>
</feature>
<feature type="region of interest" description="Disordered" evidence="3">
    <location>
        <begin position="335"/>
        <end position="362"/>
    </location>
</feature>
<feature type="short sequence motif" description="'HIGH' region" evidence="1">
    <location>
        <begin position="44"/>
        <end position="52"/>
    </location>
</feature>
<feature type="short sequence motif" description="'KMSKS' region" evidence="1">
    <location>
        <begin position="222"/>
        <end position="226"/>
    </location>
</feature>
<feature type="short sequence motif" description="Nuclear localization signal" evidence="1">
    <location>
        <begin position="242"/>
        <end position="247"/>
    </location>
</feature>
<feature type="binding site" evidence="1">
    <location>
        <position position="39"/>
    </location>
    <ligand>
        <name>L-tyrosine</name>
        <dbReference type="ChEBI" id="CHEBI:58315"/>
    </ligand>
</feature>
<feature type="binding site" evidence="1">
    <location>
        <position position="166"/>
    </location>
    <ligand>
        <name>L-tyrosine</name>
        <dbReference type="ChEBI" id="CHEBI:58315"/>
    </ligand>
</feature>
<feature type="binding site" evidence="1">
    <location>
        <position position="170"/>
    </location>
    <ligand>
        <name>L-tyrosine</name>
        <dbReference type="ChEBI" id="CHEBI:58315"/>
    </ligand>
</feature>
<feature type="binding site" evidence="1">
    <location>
        <position position="173"/>
    </location>
    <ligand>
        <name>L-tyrosine</name>
        <dbReference type="ChEBI" id="CHEBI:58315"/>
    </ligand>
</feature>
<feature type="binding site" evidence="1">
    <location>
        <position position="188"/>
    </location>
    <ligand>
        <name>L-tyrosine</name>
        <dbReference type="ChEBI" id="CHEBI:58315"/>
    </ligand>
</feature>
<feature type="sequence conflict" description="In Ref. 1; AAQ97863/CAK04282." evidence="4" ref="1">
    <original>V</original>
    <variation>A</variation>
    <location>
        <position position="351"/>
    </location>
</feature>
<reference key="1">
    <citation type="journal article" date="2004" name="Proc. Natl. Acad. Sci. U.S.A.">
        <title>Hematopoietic gene expression profile in zebrafish kidney marrow.</title>
        <authorList>
            <person name="Song H.-D."/>
            <person name="Sun X.-J."/>
            <person name="Deng M."/>
            <person name="Zhang G.-W."/>
            <person name="Zhou Y."/>
            <person name="Wu X.-Y."/>
            <person name="Sheng Y."/>
            <person name="Chen Y."/>
            <person name="Ruan Z."/>
            <person name="Jiang C.-L."/>
            <person name="Fan H.-Y."/>
            <person name="Zon L.I."/>
            <person name="Kanki J.P."/>
            <person name="Liu T.X."/>
            <person name="Look A.T."/>
            <person name="Chen Z."/>
        </authorList>
    </citation>
    <scope>NUCLEOTIDE SEQUENCE [LARGE SCALE MRNA]</scope>
    <source>
        <tissue>Kidney marrow</tissue>
    </source>
</reference>
<reference key="2">
    <citation type="journal article" date="2013" name="Nature">
        <title>The zebrafish reference genome sequence and its relationship to the human genome.</title>
        <authorList>
            <person name="Howe K."/>
            <person name="Clark M.D."/>
            <person name="Torroja C.F."/>
            <person name="Torrance J."/>
            <person name="Berthelot C."/>
            <person name="Muffato M."/>
            <person name="Collins J.E."/>
            <person name="Humphray S."/>
            <person name="McLaren K."/>
            <person name="Matthews L."/>
            <person name="McLaren S."/>
            <person name="Sealy I."/>
            <person name="Caccamo M."/>
            <person name="Churcher C."/>
            <person name="Scott C."/>
            <person name="Barrett J.C."/>
            <person name="Koch R."/>
            <person name="Rauch G.J."/>
            <person name="White S."/>
            <person name="Chow W."/>
            <person name="Kilian B."/>
            <person name="Quintais L.T."/>
            <person name="Guerra-Assuncao J.A."/>
            <person name="Zhou Y."/>
            <person name="Gu Y."/>
            <person name="Yen J."/>
            <person name="Vogel J.H."/>
            <person name="Eyre T."/>
            <person name="Redmond S."/>
            <person name="Banerjee R."/>
            <person name="Chi J."/>
            <person name="Fu B."/>
            <person name="Langley E."/>
            <person name="Maguire S.F."/>
            <person name="Laird G.K."/>
            <person name="Lloyd D."/>
            <person name="Kenyon E."/>
            <person name="Donaldson S."/>
            <person name="Sehra H."/>
            <person name="Almeida-King J."/>
            <person name="Loveland J."/>
            <person name="Trevanion S."/>
            <person name="Jones M."/>
            <person name="Quail M."/>
            <person name="Willey D."/>
            <person name="Hunt A."/>
            <person name="Burton J."/>
            <person name="Sims S."/>
            <person name="McLay K."/>
            <person name="Plumb B."/>
            <person name="Davis J."/>
            <person name="Clee C."/>
            <person name="Oliver K."/>
            <person name="Clark R."/>
            <person name="Riddle C."/>
            <person name="Elliot D."/>
            <person name="Threadgold G."/>
            <person name="Harden G."/>
            <person name="Ware D."/>
            <person name="Begum S."/>
            <person name="Mortimore B."/>
            <person name="Kerry G."/>
            <person name="Heath P."/>
            <person name="Phillimore B."/>
            <person name="Tracey A."/>
            <person name="Corby N."/>
            <person name="Dunn M."/>
            <person name="Johnson C."/>
            <person name="Wood J."/>
            <person name="Clark S."/>
            <person name="Pelan S."/>
            <person name="Griffiths G."/>
            <person name="Smith M."/>
            <person name="Glithero R."/>
            <person name="Howden P."/>
            <person name="Barker N."/>
            <person name="Lloyd C."/>
            <person name="Stevens C."/>
            <person name="Harley J."/>
            <person name="Holt K."/>
            <person name="Panagiotidis G."/>
            <person name="Lovell J."/>
            <person name="Beasley H."/>
            <person name="Henderson C."/>
            <person name="Gordon D."/>
            <person name="Auger K."/>
            <person name="Wright D."/>
            <person name="Collins J."/>
            <person name="Raisen C."/>
            <person name="Dyer L."/>
            <person name="Leung K."/>
            <person name="Robertson L."/>
            <person name="Ambridge K."/>
            <person name="Leongamornlert D."/>
            <person name="McGuire S."/>
            <person name="Gilderthorp R."/>
            <person name="Griffiths C."/>
            <person name="Manthravadi D."/>
            <person name="Nichol S."/>
            <person name="Barker G."/>
            <person name="Whitehead S."/>
            <person name="Kay M."/>
            <person name="Brown J."/>
            <person name="Murnane C."/>
            <person name="Gray E."/>
            <person name="Humphries M."/>
            <person name="Sycamore N."/>
            <person name="Barker D."/>
            <person name="Saunders D."/>
            <person name="Wallis J."/>
            <person name="Babbage A."/>
            <person name="Hammond S."/>
            <person name="Mashreghi-Mohammadi M."/>
            <person name="Barr L."/>
            <person name="Martin S."/>
            <person name="Wray P."/>
            <person name="Ellington A."/>
            <person name="Matthews N."/>
            <person name="Ellwood M."/>
            <person name="Woodmansey R."/>
            <person name="Clark G."/>
            <person name="Cooper J."/>
            <person name="Tromans A."/>
            <person name="Grafham D."/>
            <person name="Skuce C."/>
            <person name="Pandian R."/>
            <person name="Andrews R."/>
            <person name="Harrison E."/>
            <person name="Kimberley A."/>
            <person name="Garnett J."/>
            <person name="Fosker N."/>
            <person name="Hall R."/>
            <person name="Garner P."/>
            <person name="Kelly D."/>
            <person name="Bird C."/>
            <person name="Palmer S."/>
            <person name="Gehring I."/>
            <person name="Berger A."/>
            <person name="Dooley C.M."/>
            <person name="Ersan-Urun Z."/>
            <person name="Eser C."/>
            <person name="Geiger H."/>
            <person name="Geisler M."/>
            <person name="Karotki L."/>
            <person name="Kirn A."/>
            <person name="Konantz J."/>
            <person name="Konantz M."/>
            <person name="Oberlander M."/>
            <person name="Rudolph-Geiger S."/>
            <person name="Teucke M."/>
            <person name="Lanz C."/>
            <person name="Raddatz G."/>
            <person name="Osoegawa K."/>
            <person name="Zhu B."/>
            <person name="Rapp A."/>
            <person name="Widaa S."/>
            <person name="Langford C."/>
            <person name="Yang F."/>
            <person name="Schuster S.C."/>
            <person name="Carter N.P."/>
            <person name="Harrow J."/>
            <person name="Ning Z."/>
            <person name="Herrero J."/>
            <person name="Searle S.M."/>
            <person name="Enright A."/>
            <person name="Geisler R."/>
            <person name="Plasterk R.H."/>
            <person name="Lee C."/>
            <person name="Westerfield M."/>
            <person name="de Jong P.J."/>
            <person name="Zon L.I."/>
            <person name="Postlethwait J.H."/>
            <person name="Nusslein-Volhard C."/>
            <person name="Hubbard T.J."/>
            <person name="Roest Crollius H."/>
            <person name="Rogers J."/>
            <person name="Stemple D.L."/>
        </authorList>
    </citation>
    <scope>NUCLEOTIDE SEQUENCE [LARGE SCALE GENOMIC DNA]</scope>
    <source>
        <strain>Tuebingen</strain>
    </source>
</reference>
<reference key="3">
    <citation type="submission" date="2004-07" db="EMBL/GenBank/DDBJ databases">
        <authorList>
            <consortium name="NIH - Zebrafish Gene Collection (ZGC) project"/>
        </authorList>
    </citation>
    <scope>NUCLEOTIDE SEQUENCE [LARGE SCALE MRNA]</scope>
</reference>
<dbReference type="EC" id="6.1.1.1" evidence="1"/>
<dbReference type="EMBL" id="AY398430">
    <property type="protein sequence ID" value="AAQ97863.1"/>
    <property type="molecule type" value="mRNA"/>
</dbReference>
<dbReference type="EMBL" id="BX547927">
    <property type="protein sequence ID" value="CAK04282.1"/>
    <property type="molecule type" value="Genomic_DNA"/>
</dbReference>
<dbReference type="EMBL" id="BX000986">
    <property type="protein sequence ID" value="CAK04465.1"/>
    <property type="molecule type" value="Genomic_DNA"/>
</dbReference>
<dbReference type="EMBL" id="BC076558">
    <property type="protein sequence ID" value="AAH76558.1"/>
    <property type="molecule type" value="mRNA"/>
</dbReference>
<dbReference type="RefSeq" id="NP_958473.1">
    <property type="nucleotide sequence ID" value="NM_201316.1"/>
</dbReference>
<dbReference type="RefSeq" id="XP_005159655.1">
    <property type="nucleotide sequence ID" value="XM_005159598.3"/>
</dbReference>
<dbReference type="SMR" id="Q6TGS6"/>
<dbReference type="FunCoup" id="Q6TGS6">
    <property type="interactions" value="2709"/>
</dbReference>
<dbReference type="STRING" id="7955.ENSDARP00000052125"/>
<dbReference type="PaxDb" id="7955-ENSDARP00000108800"/>
<dbReference type="GeneID" id="368235"/>
<dbReference type="KEGG" id="dre:368235"/>
<dbReference type="AGR" id="ZFIN:ZDB-GENE-030425-2"/>
<dbReference type="CTD" id="8565"/>
<dbReference type="ZFIN" id="ZDB-GENE-030425-2">
    <property type="gene designation" value="yars1"/>
</dbReference>
<dbReference type="eggNOG" id="KOG2144">
    <property type="taxonomic scope" value="Eukaryota"/>
</dbReference>
<dbReference type="eggNOG" id="KOG2241">
    <property type="taxonomic scope" value="Eukaryota"/>
</dbReference>
<dbReference type="InParanoid" id="Q6TGS6"/>
<dbReference type="OrthoDB" id="197206at2759"/>
<dbReference type="PhylomeDB" id="Q6TGS6"/>
<dbReference type="TreeFam" id="TF300898"/>
<dbReference type="PRO" id="PR:Q6TGS6"/>
<dbReference type="Proteomes" id="UP000000437">
    <property type="component" value="Alternate scaffold 19"/>
</dbReference>
<dbReference type="Proteomes" id="UP000000437">
    <property type="component" value="Chromosome 19"/>
</dbReference>
<dbReference type="GO" id="GO:0005737">
    <property type="term" value="C:cytoplasm"/>
    <property type="evidence" value="ECO:0007669"/>
    <property type="project" value="UniProtKB-SubCell"/>
</dbReference>
<dbReference type="GO" id="GO:0005634">
    <property type="term" value="C:nucleus"/>
    <property type="evidence" value="ECO:0007669"/>
    <property type="project" value="UniProtKB-SubCell"/>
</dbReference>
<dbReference type="GO" id="GO:0005524">
    <property type="term" value="F:ATP binding"/>
    <property type="evidence" value="ECO:0007669"/>
    <property type="project" value="UniProtKB-KW"/>
</dbReference>
<dbReference type="GO" id="GO:0000049">
    <property type="term" value="F:tRNA binding"/>
    <property type="evidence" value="ECO:0007669"/>
    <property type="project" value="UniProtKB-KW"/>
</dbReference>
<dbReference type="GO" id="GO:0004831">
    <property type="term" value="F:tyrosine-tRNA ligase activity"/>
    <property type="evidence" value="ECO:0000318"/>
    <property type="project" value="GO_Central"/>
</dbReference>
<dbReference type="GO" id="GO:0006974">
    <property type="term" value="P:DNA damage response"/>
    <property type="evidence" value="ECO:0000315"/>
    <property type="project" value="ZFIN"/>
</dbReference>
<dbReference type="GO" id="GO:0006437">
    <property type="term" value="P:tyrosyl-tRNA aminoacylation"/>
    <property type="evidence" value="ECO:0007669"/>
    <property type="project" value="InterPro"/>
</dbReference>
<dbReference type="CDD" id="cd02799">
    <property type="entry name" value="tRNA_bind_EMAP-II_like"/>
    <property type="match status" value="1"/>
</dbReference>
<dbReference type="CDD" id="cd00805">
    <property type="entry name" value="TyrRS_core"/>
    <property type="match status" value="1"/>
</dbReference>
<dbReference type="FunFam" id="1.10.240.10:FF:000004">
    <property type="entry name" value="Tyrosine--tRNA ligase"/>
    <property type="match status" value="1"/>
</dbReference>
<dbReference type="FunFam" id="3.40.50.620:FF:000040">
    <property type="entry name" value="Tyrosine--tRNA ligase"/>
    <property type="match status" value="1"/>
</dbReference>
<dbReference type="FunFam" id="2.40.50.140:FF:000047">
    <property type="entry name" value="tyrosine--tRNA ligase, cytoplasmic isoform X2"/>
    <property type="match status" value="1"/>
</dbReference>
<dbReference type="Gene3D" id="3.40.50.620">
    <property type="entry name" value="HUPs"/>
    <property type="match status" value="1"/>
</dbReference>
<dbReference type="Gene3D" id="2.40.50.140">
    <property type="entry name" value="Nucleic acid-binding proteins"/>
    <property type="match status" value="1"/>
</dbReference>
<dbReference type="Gene3D" id="1.10.240.10">
    <property type="entry name" value="Tyrosyl-Transfer RNA Synthetase"/>
    <property type="match status" value="1"/>
</dbReference>
<dbReference type="InterPro" id="IPR002305">
    <property type="entry name" value="aa-tRNA-synth_Ic"/>
</dbReference>
<dbReference type="InterPro" id="IPR012340">
    <property type="entry name" value="NA-bd_OB-fold"/>
</dbReference>
<dbReference type="InterPro" id="IPR014729">
    <property type="entry name" value="Rossmann-like_a/b/a_fold"/>
</dbReference>
<dbReference type="InterPro" id="IPR002547">
    <property type="entry name" value="tRNA-bd_dom"/>
</dbReference>
<dbReference type="InterPro" id="IPR002307">
    <property type="entry name" value="Tyr-tRNA-ligase"/>
</dbReference>
<dbReference type="InterPro" id="IPR051270">
    <property type="entry name" value="Tyrosine-tRNA_ligase_regulator"/>
</dbReference>
<dbReference type="NCBIfam" id="NF006330">
    <property type="entry name" value="PRK08560.1"/>
    <property type="match status" value="1"/>
</dbReference>
<dbReference type="NCBIfam" id="TIGR00234">
    <property type="entry name" value="tyrS"/>
    <property type="match status" value="1"/>
</dbReference>
<dbReference type="PANTHER" id="PTHR11586">
    <property type="entry name" value="TRNA-AMINOACYLATION COFACTOR ARC1 FAMILY MEMBER"/>
    <property type="match status" value="1"/>
</dbReference>
<dbReference type="PANTHER" id="PTHR11586:SF43">
    <property type="entry name" value="TYROSINE--TRNA LIGASE, CYTOPLASMIC"/>
    <property type="match status" value="1"/>
</dbReference>
<dbReference type="Pfam" id="PF00579">
    <property type="entry name" value="tRNA-synt_1b"/>
    <property type="match status" value="1"/>
</dbReference>
<dbReference type="Pfam" id="PF01588">
    <property type="entry name" value="tRNA_bind"/>
    <property type="match status" value="1"/>
</dbReference>
<dbReference type="PRINTS" id="PR01040">
    <property type="entry name" value="TRNASYNTHTYR"/>
</dbReference>
<dbReference type="SUPFAM" id="SSF50249">
    <property type="entry name" value="Nucleic acid-binding proteins"/>
    <property type="match status" value="1"/>
</dbReference>
<dbReference type="SUPFAM" id="SSF52374">
    <property type="entry name" value="Nucleotidylyl transferase"/>
    <property type="match status" value="1"/>
</dbReference>
<dbReference type="PROSITE" id="PS50886">
    <property type="entry name" value="TRBD"/>
    <property type="match status" value="1"/>
</dbReference>
<sequence length="529" mass="59534">MGEQLSPDEKFQLITRNLQEVLGEERLKEILKERELKVYWGTATTGKPHVAYFVPMSKIADFLKAGCEVTILFADLHAYLDNMKAPWELLELRVKYYEQVIKAMLESIGVPLDKLKFVKGTDYQLSREYTLDVYRLSSMVTEHDAKKAGAEVVKQVEHPLLSGLLYPGLQALDEEYLKVDAQFGGVDQRKIFTLAEKYLPSLGYTKRSHLMNPMVPGLTGSKMSSSEEESKIDLLDKNQDVKKKLKKAFCEPGNVENNGVLSFVKHVLFPLHSEFVIKRDPKFGGDKVYTDFEEVEKDFAAEQIHPGDLKASVELALNKLLDPIRKKFESPELKKLTSSAYPEPSKNKGGVKGNPKQTTDDDEVIPSRLDIRVGKVISVEKHPDADSLYLEKIDVGEEQPRTVVSGLVAYITEEQLQDRLVVLLCNLKPQKMRGIESQAMVLCASIEGEPRKVEPLDPPEGSAAGDRVYVEGYESGKPDDELKPKKKVFEKLQVDLKISGEFVAQWKEQNLMTKLGRITCKTLKGGNIS</sequence>
<comment type="function">
    <text evidence="1">Catalyzes the attachment of tyrosine to tRNA(Tyr) in a two-step reaction: tyrosine is first activated by ATP to form Tyr-AMP and then transferred to the acceptor end of tRNA(Tyr).</text>
</comment>
<comment type="catalytic activity">
    <reaction evidence="1">
        <text>tRNA(Tyr) + L-tyrosine + ATP = L-tyrosyl-tRNA(Tyr) + AMP + diphosphate + H(+)</text>
        <dbReference type="Rhea" id="RHEA:10220"/>
        <dbReference type="Rhea" id="RHEA-COMP:9706"/>
        <dbReference type="Rhea" id="RHEA-COMP:9707"/>
        <dbReference type="ChEBI" id="CHEBI:15378"/>
        <dbReference type="ChEBI" id="CHEBI:30616"/>
        <dbReference type="ChEBI" id="CHEBI:33019"/>
        <dbReference type="ChEBI" id="CHEBI:58315"/>
        <dbReference type="ChEBI" id="CHEBI:78442"/>
        <dbReference type="ChEBI" id="CHEBI:78536"/>
        <dbReference type="ChEBI" id="CHEBI:456215"/>
        <dbReference type="EC" id="6.1.1.1"/>
    </reaction>
    <physiologicalReaction direction="left-to-right" evidence="1">
        <dbReference type="Rhea" id="RHEA:10221"/>
    </physiologicalReaction>
</comment>
<comment type="subunit">
    <text evidence="1">Homodimer.</text>
</comment>
<comment type="subcellular location">
    <subcellularLocation>
        <location evidence="1">Cytoplasm</location>
    </subcellularLocation>
    <subcellularLocation>
        <location evidence="1">Nucleus</location>
    </subcellularLocation>
</comment>
<comment type="domain">
    <text evidence="1">The nuclear localization signal, which mediates localization to the nucleus, is also important for interacting with tRNA(Tyr), suggesting that it is sterically blocked when tRNA(Tyr) is bound.</text>
</comment>
<comment type="similarity">
    <text evidence="4">Belongs to the class-I aminoacyl-tRNA synthetase family.</text>
</comment>